<feature type="chain" id="PRO_0000310166" description="Nascent polypeptide-associated complex subunit beta">
    <location>
        <begin position="1"/>
        <end position="159"/>
    </location>
</feature>
<feature type="domain" description="NAC-A/B" evidence="2">
    <location>
        <begin position="36"/>
        <end position="101"/>
    </location>
</feature>
<feature type="region of interest" description="Disordered" evidence="3">
    <location>
        <begin position="1"/>
        <end position="39"/>
    </location>
</feature>
<feature type="region of interest" description="Disordered" evidence="3">
    <location>
        <begin position="121"/>
        <end position="159"/>
    </location>
</feature>
<feature type="compositionally biased region" description="Basic residues" evidence="3">
    <location>
        <begin position="23"/>
        <end position="32"/>
    </location>
</feature>
<feature type="compositionally biased region" description="Acidic residues" evidence="3">
    <location>
        <begin position="136"/>
        <end position="153"/>
    </location>
</feature>
<evidence type="ECO:0000250" key="1"/>
<evidence type="ECO:0000255" key="2">
    <source>
        <dbReference type="PROSITE-ProRule" id="PRU00507"/>
    </source>
</evidence>
<evidence type="ECO:0000256" key="3">
    <source>
        <dbReference type="SAM" id="MobiDB-lite"/>
    </source>
</evidence>
<evidence type="ECO:0000305" key="4"/>
<sequence length="159" mass="17570">MDMEKLKRMQARGGVRTGDGKGTPRRKVKNVHKSTGMDDKKLQTSLKKLNVQPIQAIEEVNMFKSDGNVIHFAAPKVHAAVPSNTFAIYGNGEDKELTELVPGILNQLGPDSLASLRKLAESYQSMQKAEGGEDKKDDDEDDDDIPDLVEGENFEDKVE</sequence>
<reference key="1">
    <citation type="journal article" date="2011" name="PLoS Genet.">
        <title>Genomic analysis of the necrotrophic fungal pathogens Sclerotinia sclerotiorum and Botrytis cinerea.</title>
        <authorList>
            <person name="Amselem J."/>
            <person name="Cuomo C.A."/>
            <person name="van Kan J.A.L."/>
            <person name="Viaud M."/>
            <person name="Benito E.P."/>
            <person name="Couloux A."/>
            <person name="Coutinho P.M."/>
            <person name="de Vries R.P."/>
            <person name="Dyer P.S."/>
            <person name="Fillinger S."/>
            <person name="Fournier E."/>
            <person name="Gout L."/>
            <person name="Hahn M."/>
            <person name="Kohn L."/>
            <person name="Lapalu N."/>
            <person name="Plummer K.M."/>
            <person name="Pradier J.-M."/>
            <person name="Quevillon E."/>
            <person name="Sharon A."/>
            <person name="Simon A."/>
            <person name="ten Have A."/>
            <person name="Tudzynski B."/>
            <person name="Tudzynski P."/>
            <person name="Wincker P."/>
            <person name="Andrew M."/>
            <person name="Anthouard V."/>
            <person name="Beever R.E."/>
            <person name="Beffa R."/>
            <person name="Benoit I."/>
            <person name="Bouzid O."/>
            <person name="Brault B."/>
            <person name="Chen Z."/>
            <person name="Choquer M."/>
            <person name="Collemare J."/>
            <person name="Cotton P."/>
            <person name="Danchin E.G."/>
            <person name="Da Silva C."/>
            <person name="Gautier A."/>
            <person name="Giraud C."/>
            <person name="Giraud T."/>
            <person name="Gonzalez C."/>
            <person name="Grossetete S."/>
            <person name="Gueldener U."/>
            <person name="Henrissat B."/>
            <person name="Howlett B.J."/>
            <person name="Kodira C."/>
            <person name="Kretschmer M."/>
            <person name="Lappartient A."/>
            <person name="Leroch M."/>
            <person name="Levis C."/>
            <person name="Mauceli E."/>
            <person name="Neuveglise C."/>
            <person name="Oeser B."/>
            <person name="Pearson M."/>
            <person name="Poulain J."/>
            <person name="Poussereau N."/>
            <person name="Quesneville H."/>
            <person name="Rascle C."/>
            <person name="Schumacher J."/>
            <person name="Segurens B."/>
            <person name="Sexton A."/>
            <person name="Silva E."/>
            <person name="Sirven C."/>
            <person name="Soanes D.M."/>
            <person name="Talbot N.J."/>
            <person name="Templeton M."/>
            <person name="Yandava C."/>
            <person name="Yarden O."/>
            <person name="Zeng Q."/>
            <person name="Rollins J.A."/>
            <person name="Lebrun M.-H."/>
            <person name="Dickman M."/>
        </authorList>
    </citation>
    <scope>NUCLEOTIDE SEQUENCE [LARGE SCALE GENOMIC DNA]</scope>
    <source>
        <strain>B05.10</strain>
    </source>
</reference>
<reference key="2">
    <citation type="journal article" date="2012" name="Eukaryot. Cell">
        <title>Genome update of Botrytis cinerea strains B05.10 and T4.</title>
        <authorList>
            <person name="Staats M."/>
            <person name="van Kan J.A.L."/>
        </authorList>
    </citation>
    <scope>NUCLEOTIDE SEQUENCE [LARGE SCALE GENOMIC DNA]</scope>
    <scope>GENOME REANNOTATION</scope>
    <source>
        <strain>B05.10</strain>
    </source>
</reference>
<reference key="3">
    <citation type="journal article" date="2017" name="Mol. Plant Pathol.">
        <title>A gapless genome sequence of the fungus Botrytis cinerea.</title>
        <authorList>
            <person name="van Kan J.A.L."/>
            <person name="Stassen J.H.M."/>
            <person name="Mosbach A."/>
            <person name="van der Lee T.A.J."/>
            <person name="Faino L."/>
            <person name="Farmer A.D."/>
            <person name="Papasotiriou D.G."/>
            <person name="Zhou S."/>
            <person name="Seidl M.F."/>
            <person name="Cottam E."/>
            <person name="Edel D."/>
            <person name="Hahn M."/>
            <person name="Schwartz D.C."/>
            <person name="Dietrich R.A."/>
            <person name="Widdison S."/>
            <person name="Scalliet G."/>
        </authorList>
    </citation>
    <scope>NUCLEOTIDE SEQUENCE [LARGE SCALE GENOMIC DNA]</scope>
    <scope>GENOME REANNOTATION</scope>
    <source>
        <strain>B05.10</strain>
    </source>
</reference>
<name>NACB_BOTFB</name>
<organism>
    <name type="scientific">Botryotinia fuckeliana (strain B05.10)</name>
    <name type="common">Noble rot fungus</name>
    <name type="synonym">Botrytis cinerea</name>
    <dbReference type="NCBI Taxonomy" id="332648"/>
    <lineage>
        <taxon>Eukaryota</taxon>
        <taxon>Fungi</taxon>
        <taxon>Dikarya</taxon>
        <taxon>Ascomycota</taxon>
        <taxon>Pezizomycotina</taxon>
        <taxon>Leotiomycetes</taxon>
        <taxon>Helotiales</taxon>
        <taxon>Sclerotiniaceae</taxon>
        <taxon>Botrytis</taxon>
    </lineage>
</organism>
<gene>
    <name type="primary">egd1</name>
    <name type="ORF">BC1G_07699</name>
    <name type="ORF">BCIN_09g06450</name>
</gene>
<comment type="function">
    <text evidence="1">Component of the nascent polypeptide-associated complex (NAC), a dynamic component of the ribosomal exit tunnel, protecting the emerging polypeptides from interaction with other cytoplasmic proteins to ensure appropriate nascent protein targeting. The NAC complex also promotes mitochondrial protein import by enhancing productive ribosome interactions with the outer mitochondrial membrane and blocks the inappropriate interaction of ribosomes translating non-secretory nascent polypeptides with translocation sites in the membrane of the endoplasmic reticulum. EGD1 may act as a transcription factor that exert a negative effect on the expression of several genes that are transcribed by RNA polymerase II.</text>
</comment>
<comment type="subunit">
    <text evidence="1">Part of the nascent polypeptide-associated complex (NAC), consisting of EGD2 and EGD1. NAC associates with ribosomes via EGD1 (By similarity).</text>
</comment>
<comment type="subcellular location">
    <subcellularLocation>
        <location evidence="1">Cytoplasm</location>
    </subcellularLocation>
    <subcellularLocation>
        <location evidence="1">Nucleus</location>
    </subcellularLocation>
    <text evidence="1">Predominantly cytoplasmic, may also transiently localize to the nucleus.</text>
</comment>
<comment type="similarity">
    <text evidence="4">Belongs to the NAC-beta family.</text>
</comment>
<proteinExistence type="inferred from homology"/>
<accession>A6S6B0</accession>
<accession>A0A384JTS6</accession>
<keyword id="KW-0963">Cytoplasm</keyword>
<keyword id="KW-0539">Nucleus</keyword>
<keyword id="KW-0653">Protein transport</keyword>
<keyword id="KW-1185">Reference proteome</keyword>
<keyword id="KW-0678">Repressor</keyword>
<keyword id="KW-0804">Transcription</keyword>
<keyword id="KW-0805">Transcription regulation</keyword>
<keyword id="KW-0813">Transport</keyword>
<dbReference type="EMBL" id="CP009813">
    <property type="protein sequence ID" value="ATZ53881.1"/>
    <property type="molecule type" value="Genomic_DNA"/>
</dbReference>
<dbReference type="RefSeq" id="XP_001553286.1">
    <property type="nucleotide sequence ID" value="XM_001553236.1"/>
</dbReference>
<dbReference type="SMR" id="A6S6B0"/>
<dbReference type="EnsemblFungi" id="Bcin09g06450.1">
    <property type="protein sequence ID" value="Bcin09p06450.1"/>
    <property type="gene ID" value="Bcin09g06450"/>
</dbReference>
<dbReference type="VEuPathDB" id="FungiDB:Bcin09g06450"/>
<dbReference type="OMA" id="RMQQSVR"/>
<dbReference type="OrthoDB" id="8033832at2759"/>
<dbReference type="Proteomes" id="UP000001798">
    <property type="component" value="Chromosome bcin09"/>
</dbReference>
<dbReference type="GO" id="GO:0005737">
    <property type="term" value="C:cytoplasm"/>
    <property type="evidence" value="ECO:0007669"/>
    <property type="project" value="UniProtKB-SubCell"/>
</dbReference>
<dbReference type="GO" id="GO:0005634">
    <property type="term" value="C:nucleus"/>
    <property type="evidence" value="ECO:0007669"/>
    <property type="project" value="UniProtKB-SubCell"/>
</dbReference>
<dbReference type="GO" id="GO:0015031">
    <property type="term" value="P:protein transport"/>
    <property type="evidence" value="ECO:0007669"/>
    <property type="project" value="UniProtKB-KW"/>
</dbReference>
<dbReference type="CDD" id="cd22055">
    <property type="entry name" value="NAC_BTF3"/>
    <property type="match status" value="1"/>
</dbReference>
<dbReference type="FunFam" id="2.20.70.30:FF:000003">
    <property type="entry name" value="Nascent polypeptide-associated complex subunit beta"/>
    <property type="match status" value="1"/>
</dbReference>
<dbReference type="Gene3D" id="2.20.70.30">
    <property type="entry name" value="Nascent polypeptide-associated complex domain"/>
    <property type="match status" value="1"/>
</dbReference>
<dbReference type="InterPro" id="IPR039370">
    <property type="entry name" value="BTF3"/>
</dbReference>
<dbReference type="InterPro" id="IPR038187">
    <property type="entry name" value="NAC_A/B_dom_sf"/>
</dbReference>
<dbReference type="InterPro" id="IPR002715">
    <property type="entry name" value="Nas_poly-pep-assoc_cplx_dom"/>
</dbReference>
<dbReference type="PANTHER" id="PTHR10351">
    <property type="entry name" value="TRANSCRIPTION FACTOR BTF3 FAMILY MEMBER"/>
    <property type="match status" value="1"/>
</dbReference>
<dbReference type="Pfam" id="PF01849">
    <property type="entry name" value="NAC"/>
    <property type="match status" value="1"/>
</dbReference>
<dbReference type="SMART" id="SM01407">
    <property type="entry name" value="NAC"/>
    <property type="match status" value="1"/>
</dbReference>
<dbReference type="PROSITE" id="PS51151">
    <property type="entry name" value="NAC_AB"/>
    <property type="match status" value="1"/>
</dbReference>
<protein>
    <recommendedName>
        <fullName>Nascent polypeptide-associated complex subunit beta</fullName>
        <shortName>NAC-beta</shortName>
    </recommendedName>
    <alternativeName>
        <fullName>Beta-NAC</fullName>
    </alternativeName>
</protein>